<reference key="1">
    <citation type="journal article" date="1997" name="J. Bacteriol.">
        <title>Characterization of four outer membrane proteins that play a role in utilization of starch by Bacteroides thetaiotaomicron.</title>
        <authorList>
            <person name="Reeves A.R."/>
            <person name="Wang G.R."/>
            <person name="Salyers A.A."/>
        </authorList>
    </citation>
    <scope>NUCLEOTIDE SEQUENCE [GENOMIC DNA]</scope>
    <scope>INDUCTION</scope>
    <source>
        <strain>ATCC 29148 / DSM 2079 / JCM 5827 / CCUG 10774 / NCTC 10582 / VPI-5482 / E50</strain>
    </source>
</reference>
<reference key="2">
    <citation type="journal article" date="2003" name="Science">
        <title>A genomic view of the human-Bacteroides thetaiotaomicron symbiosis.</title>
        <authorList>
            <person name="Xu J."/>
            <person name="Bjursell M.K."/>
            <person name="Himrod J."/>
            <person name="Deng S."/>
            <person name="Carmichael L.K."/>
            <person name="Chiang H.C."/>
            <person name="Hooper L.V."/>
            <person name="Gordon J.I."/>
        </authorList>
    </citation>
    <scope>NUCLEOTIDE SEQUENCE [LARGE SCALE GENOMIC DNA]</scope>
    <source>
        <strain>ATCC 29148 / DSM 2079 / JCM 5827 / CCUG 10774 / NCTC 10582 / VPI-5482 / E50</strain>
    </source>
</reference>
<reference key="3">
    <citation type="journal article" date="2001" name="J. Bacteriol.">
        <title>Biochemical analysis of interactions between outer membrane proteins that contribute to starch utilization by Bacteroides thetaiotaomicron.</title>
        <authorList>
            <person name="Cho K.H."/>
            <person name="Salyers A.A."/>
        </authorList>
    </citation>
    <scope>FUNCTION</scope>
    <scope>INTERACTION WITH SUSF</scope>
    <source>
        <strain>ATCC 29148 / DSM 2079 / JCM 5827 / CCUG 10774 / NCTC 10582 / VPI-5482 / E50</strain>
    </source>
</reference>
<reference key="4">
    <citation type="journal article" date="2000" name="J. Bacteriol.">
        <title>Characterization of four outer membrane proteins involved in binding starch to the cell surface of Bacteroides thetaiotaomicron.</title>
        <authorList>
            <person name="Shipman J.A."/>
            <person name="Berleman J.E."/>
            <person name="Salyers A.A."/>
        </authorList>
    </citation>
    <scope>FUNCTION</scope>
    <scope>STARCH-BINDING</scope>
    <source>
        <strain>ATCC 29148 / DSM 2079 / JCM 5827 / CCUG 10774 / NCTC 10582 / VPI-5482 / E50</strain>
    </source>
</reference>
<reference key="5">
    <citation type="journal article" date="2012" name="J. Biol. Chem.">
        <title>Multidomain carbohydrate-binding proteins involved in bacteroides thetaiotaomicron starch metabolism.</title>
        <authorList>
            <person name="Cameron E.A."/>
            <person name="Maynard M.A."/>
            <person name="Smith C.J."/>
            <person name="Smith T.J."/>
            <person name="Koropatkin N.M."/>
            <person name="Martens E.C."/>
        </authorList>
    </citation>
    <scope>X-RAY CRYSTALLOGRAPHY (1.30 ANGSTROMS) OF 35-387 IN COMPLEX WITH ALPHA-D-GLUCOSE</scope>
    <scope>FUNCTION</scope>
    <scope>SUBCELLULAR LOCATION</scope>
    <scope>SUBUNIT</scope>
    <scope>STARCH-BINDING</scope>
    <scope>DIACYLGLYCEROL AT CYS-21</scope>
    <scope>PALMITOYLATION AT CYS-21</scope>
    <scope>MUTAGENESIS OF CYS-21; TRP-192; LYS-221; TYR-229; ASN-252; ARG-326; TRP-336 AND ARG-350</scope>
    <source>
        <strain>ATCC 29148 / DSM 2079 / JCM 5827 / CCUG 10774 / NCTC 10582 / VPI-5482 / E50</strain>
    </source>
</reference>
<sequence length="387" mass="42755">MKKISNILLAVTFALPLFTACETDNDSNPILNEPDTFTLNTPAYAANNVYDLKNAQTVELTCSQPDYGFPAATTYTVQASFEQDFIEATDESKANYTVLESTSPTAKINVDASELNNALLDLWTAVNGEQAELPTEPVAVYIRLKANITSSGKGVCFSNVIELPNVLISKSTSSLTPPKTMFIVGSMLDTDWKVWKPMAGVYGMDGQFYSMIYFDANSEFKFGTKENEYIGINDNRVTVTDKAGAGVSGSDNFVVENAGWYLFYVKAAVKGDDYQFTITFYPAEVYLFGNTTGGSWAFNDEWKFTVPATKDGNFVSPAMTASGEVRMCFKTDLDWWRTEFTLHDGEIFYRDFNLIDSWTEKGDGYSIQGSAGNVIHLNFTAGTGEKK</sequence>
<accession>G8JZT0</accession>
<accession>Q45769</accession>
<accession>Q7C3Z3</accession>
<organism>
    <name type="scientific">Bacteroides thetaiotaomicron (strain ATCC 29148 / DSM 2079 / JCM 5827 / CCUG 10774 / NCTC 10582 / VPI-5482 / E50)</name>
    <dbReference type="NCBI Taxonomy" id="226186"/>
    <lineage>
        <taxon>Bacteria</taxon>
        <taxon>Pseudomonadati</taxon>
        <taxon>Bacteroidota</taxon>
        <taxon>Bacteroidia</taxon>
        <taxon>Bacteroidales</taxon>
        <taxon>Bacteroidaceae</taxon>
        <taxon>Bacteroides</taxon>
    </lineage>
</organism>
<keyword id="KW-0002">3D-structure</keyword>
<keyword id="KW-0119">Carbohydrate metabolism</keyword>
<keyword id="KW-0998">Cell outer membrane</keyword>
<keyword id="KW-0449">Lipoprotein</keyword>
<keyword id="KW-0472">Membrane</keyword>
<keyword id="KW-0564">Palmitate</keyword>
<keyword id="KW-1185">Reference proteome</keyword>
<keyword id="KW-0732">Signal</keyword>
<name>SUSE_BACTN</name>
<comment type="function">
    <text evidence="2 3 4">Starch-binding protein present at the surface of the cell. Mediates starch-binding before starch transport in the periplasm for degradation. SusE and SusF do not constitute the major starch-binding proteins in starch degradation pathway. Has higher affinity for starch compared to SusF.</text>
</comment>
<comment type="pathway">
    <text>Glycan degradation; starch degradation.</text>
</comment>
<comment type="subunit">
    <text evidence="3 4 6">Monomer (Probable). Interacts with SusF.</text>
</comment>
<comment type="subcellular location">
    <subcellularLocation>
        <location evidence="4">Cell outer membrane</location>
        <topology evidence="1 4">Lipid-anchor</topology>
    </subcellularLocation>
</comment>
<comment type="induction">
    <text evidence="5">By maltose.</text>
</comment>
<comment type="domain">
    <text evidence="4">The carbohydrate binding modules (CBM) mediate starch-binding.</text>
</comment>
<comment type="similarity">
    <text evidence="6">Belongs to the SusE family.</text>
</comment>
<proteinExistence type="evidence at protein level"/>
<feature type="signal peptide" evidence="1">
    <location>
        <begin position="1"/>
        <end position="20"/>
    </location>
</feature>
<feature type="chain" id="PRO_0000425889" description="Outer membrane protein SusE">
    <location>
        <begin position="21"/>
        <end position="387"/>
    </location>
</feature>
<feature type="region of interest" description="Carbohydrate binding module (CBM) 1">
    <location>
        <begin position="174"/>
        <end position="283"/>
    </location>
</feature>
<feature type="region of interest" description="Carbohydrate binding module (CBM) 2">
    <location>
        <begin position="284"/>
        <end position="387"/>
    </location>
</feature>
<feature type="binding site">
    <location>
        <position position="326"/>
    </location>
    <ligand>
        <name>D-glucose</name>
        <dbReference type="ChEBI" id="CHEBI:4167"/>
    </ligand>
</feature>
<feature type="binding site">
    <location>
        <position position="335"/>
    </location>
    <ligand>
        <name>D-glucose</name>
        <dbReference type="ChEBI" id="CHEBI:4167"/>
    </ligand>
</feature>
<feature type="binding site">
    <location>
        <begin position="350"/>
        <end position="355"/>
    </location>
    <ligand>
        <name>D-glucose</name>
        <dbReference type="ChEBI" id="CHEBI:4167"/>
    </ligand>
</feature>
<feature type="lipid moiety-binding region" description="N-palmitoyl cysteine" evidence="7">
    <location>
        <position position="21"/>
    </location>
</feature>
<feature type="lipid moiety-binding region" description="S-diacylglycerol cysteine" evidence="7">
    <location>
        <position position="21"/>
    </location>
</feature>
<feature type="mutagenesis site" description="Abolishes cell outer membrane localization." evidence="4">
    <original>C</original>
    <variation>A</variation>
    <location>
        <position position="21"/>
    </location>
</feature>
<feature type="mutagenesis site" description="Impaired binding to starch; when associated with A-221; A-229 and A-252. Abolished binding to starch; when associated with A-221; A-229; A-252; A-326; A-336 and A-350." evidence="4">
    <original>W</original>
    <variation>A</variation>
    <location>
        <position position="192"/>
    </location>
</feature>
<feature type="mutagenesis site" description="Impaired binding to starch; when associated with A-192; A-229 and A-252. Abolished binding to starch; when associated with A-192; A-229; A-252; A-326; A-336 and A-350." evidence="4">
    <original>K</original>
    <variation>A</variation>
    <location>
        <position position="221"/>
    </location>
</feature>
<feature type="mutagenesis site" description="Impaired binding to starch; when associated with A-192; A-221 and A-252. Abolished binding to starch; when associated with A-192; A-221; A-252; A-326; A-336 and A-350." evidence="4">
    <original>Y</original>
    <variation>A</variation>
    <location>
        <position position="229"/>
    </location>
</feature>
<feature type="mutagenesis site" description="Impaired binding to starch; when associated with A-192; A-221 and A-229. Abolished binding to starch; when associated with A-192; A-221; A-229; A-326; A-336 and A-350." evidence="4">
    <original>N</original>
    <variation>A</variation>
    <location>
        <position position="252"/>
    </location>
</feature>
<feature type="mutagenesis site" description="Impaired binding to starch; when associated with A-336 and A-350. Abolished binding to starch; when associated with A-192; A-221; A-229; A-252; A-336 and A-350." evidence="4">
    <original>R</original>
    <variation>A</variation>
    <location>
        <position position="326"/>
    </location>
</feature>
<feature type="mutagenesis site" description="Impaired binding to starch; when associated with A-326 and A-350. Abolished binding to starch; when associated with A-192; A-221; A-229; A-252; A-326; and A-350." evidence="4">
    <original>W</original>
    <variation>A</variation>
    <location>
        <position position="336"/>
    </location>
</feature>
<feature type="mutagenesis site" description="Impaired binding to starch; when associated with A-326 and A-336. Abolished binding to starch; when associated with A-192; A-221; A-229; A-252; A-326 and A-336." evidence="4">
    <original>R</original>
    <variation>A</variation>
    <location>
        <position position="350"/>
    </location>
</feature>
<feature type="strand" evidence="8">
    <location>
        <begin position="182"/>
        <end position="185"/>
    </location>
</feature>
<feature type="turn" evidence="8">
    <location>
        <begin position="186"/>
        <end position="188"/>
    </location>
</feature>
<feature type="strand" evidence="8">
    <location>
        <begin position="195"/>
        <end position="197"/>
    </location>
</feature>
<feature type="strand" evidence="8">
    <location>
        <begin position="207"/>
        <end position="214"/>
    </location>
</feature>
<feature type="strand" evidence="8">
    <location>
        <begin position="218"/>
        <end position="225"/>
    </location>
</feature>
<feature type="strand" evidence="8">
    <location>
        <begin position="237"/>
        <end position="244"/>
    </location>
</feature>
<feature type="strand" evidence="8">
    <location>
        <begin position="250"/>
        <end position="255"/>
    </location>
</feature>
<feature type="strand" evidence="8">
    <location>
        <begin position="259"/>
        <end position="270"/>
    </location>
</feature>
<feature type="strand" evidence="8">
    <location>
        <begin position="273"/>
        <end position="282"/>
    </location>
</feature>
<feature type="strand" evidence="8">
    <location>
        <begin position="285"/>
        <end position="289"/>
    </location>
</feature>
<feature type="helix" evidence="8">
    <location>
        <begin position="290"/>
        <end position="292"/>
    </location>
</feature>
<feature type="helix" evidence="8">
    <location>
        <begin position="300"/>
        <end position="302"/>
    </location>
</feature>
<feature type="strand" evidence="8">
    <location>
        <begin position="326"/>
        <end position="329"/>
    </location>
</feature>
<feature type="helix" evidence="8">
    <location>
        <begin position="335"/>
        <end position="338"/>
    </location>
</feature>
<feature type="strand" evidence="8">
    <location>
        <begin position="339"/>
        <end position="343"/>
    </location>
</feature>
<feature type="strand" evidence="8">
    <location>
        <begin position="346"/>
        <end position="349"/>
    </location>
</feature>
<feature type="helix" evidence="8">
    <location>
        <begin position="358"/>
        <end position="360"/>
    </location>
</feature>
<feature type="helix" evidence="8">
    <location>
        <begin position="363"/>
        <end position="365"/>
    </location>
</feature>
<feature type="strand" evidence="8">
    <location>
        <begin position="375"/>
        <end position="378"/>
    </location>
</feature>
<feature type="turn" evidence="8">
    <location>
        <begin position="379"/>
        <end position="382"/>
    </location>
</feature>
<feature type="strand" evidence="8">
    <location>
        <begin position="383"/>
        <end position="386"/>
    </location>
</feature>
<evidence type="ECO:0000255" key="1">
    <source>
        <dbReference type="PROSITE-ProRule" id="PRU00303"/>
    </source>
</evidence>
<evidence type="ECO:0000269" key="2">
    <source>
    </source>
</evidence>
<evidence type="ECO:0000269" key="3">
    <source>
    </source>
</evidence>
<evidence type="ECO:0000269" key="4">
    <source>
    </source>
</evidence>
<evidence type="ECO:0000269" key="5">
    <source>
    </source>
</evidence>
<evidence type="ECO:0000305" key="6"/>
<evidence type="ECO:0000305" key="7">
    <source>
    </source>
</evidence>
<evidence type="ECO:0007829" key="8">
    <source>
        <dbReference type="PDB" id="4FCH"/>
    </source>
</evidence>
<gene>
    <name type="primary">susE</name>
    <name type="ordered locus">BT_3700</name>
</gene>
<protein>
    <recommendedName>
        <fullName>Outer membrane protein SusE</fullName>
    </recommendedName>
    <alternativeName>
        <fullName>Starch-utilization system protein E</fullName>
    </alternativeName>
</protein>
<dbReference type="EMBL" id="L77615">
    <property type="protein sequence ID" value="AAB42171.1"/>
    <property type="molecule type" value="Genomic_DNA"/>
</dbReference>
<dbReference type="EMBL" id="AE015928">
    <property type="protein sequence ID" value="AAO78805.1"/>
    <property type="molecule type" value="Genomic_DNA"/>
</dbReference>
<dbReference type="RefSeq" id="NP_812611.1">
    <property type="nucleotide sequence ID" value="NC_004663.1"/>
</dbReference>
<dbReference type="RefSeq" id="WP_008767006.1">
    <property type="nucleotide sequence ID" value="NC_004663.1"/>
</dbReference>
<dbReference type="PDB" id="4FCH">
    <property type="method" value="X-ray"/>
    <property type="resolution" value="1.30 A"/>
    <property type="chains" value="A/B=171-387"/>
</dbReference>
<dbReference type="PDB" id="4FEM">
    <property type="method" value="X-ray"/>
    <property type="resolution" value="2.50 A"/>
    <property type="chains" value="A=35-387"/>
</dbReference>
<dbReference type="PDBsum" id="4FCH"/>
<dbReference type="PDBsum" id="4FEM"/>
<dbReference type="SMR" id="G8JZT0"/>
<dbReference type="STRING" id="226186.BT_3700"/>
<dbReference type="TCDB" id="1.B.38.4.1">
    <property type="family name" value="the treponema porin major surface protein (tp-msp) family"/>
</dbReference>
<dbReference type="PaxDb" id="226186-BT_3700"/>
<dbReference type="DNASU" id="1076278"/>
<dbReference type="EnsemblBacteria" id="AAO78805">
    <property type="protein sequence ID" value="AAO78805"/>
    <property type="gene ID" value="BT_3700"/>
</dbReference>
<dbReference type="GeneID" id="60924869"/>
<dbReference type="KEGG" id="bth:BT_3700"/>
<dbReference type="PATRIC" id="fig|226186.12.peg.3760"/>
<dbReference type="eggNOG" id="ENOG502Z9RZ">
    <property type="taxonomic scope" value="Bacteria"/>
</dbReference>
<dbReference type="HOGENOM" id="CLU_042892_1_0_10"/>
<dbReference type="InParanoid" id="G8JZT0"/>
<dbReference type="OrthoDB" id="1100554at2"/>
<dbReference type="UniPathway" id="UPA00153"/>
<dbReference type="EvolutionaryTrace" id="G8JZT0"/>
<dbReference type="Proteomes" id="UP000001414">
    <property type="component" value="Chromosome"/>
</dbReference>
<dbReference type="GO" id="GO:0009279">
    <property type="term" value="C:cell outer membrane"/>
    <property type="evidence" value="ECO:0007669"/>
    <property type="project" value="UniProtKB-SubCell"/>
</dbReference>
<dbReference type="GO" id="GO:0019867">
    <property type="term" value="C:outer membrane"/>
    <property type="evidence" value="ECO:0000314"/>
    <property type="project" value="MENGO"/>
</dbReference>
<dbReference type="GO" id="GO:2001070">
    <property type="term" value="F:starch binding"/>
    <property type="evidence" value="ECO:0000314"/>
    <property type="project" value="MENGO"/>
</dbReference>
<dbReference type="GO" id="GO:0005983">
    <property type="term" value="P:starch catabolic process"/>
    <property type="evidence" value="ECO:0007669"/>
    <property type="project" value="UniProtKB-UniPathway"/>
</dbReference>
<dbReference type="CDD" id="cd12965">
    <property type="entry name" value="CBM-Eb_CBM-Fb"/>
    <property type="match status" value="1"/>
</dbReference>
<dbReference type="CDD" id="cd12966">
    <property type="entry name" value="CBM-Ec_CBM-Fc"/>
    <property type="match status" value="1"/>
</dbReference>
<dbReference type="Gene3D" id="2.60.40.3610">
    <property type="match status" value="1"/>
</dbReference>
<dbReference type="Gene3D" id="2.60.40.3620">
    <property type="match status" value="1"/>
</dbReference>
<dbReference type="InterPro" id="IPR025970">
    <property type="entry name" value="SusE"/>
</dbReference>
<dbReference type="InterPro" id="IPR032187">
    <property type="entry name" value="SusF/SusE-like_C"/>
</dbReference>
<dbReference type="Pfam" id="PF14292">
    <property type="entry name" value="SusE"/>
    <property type="match status" value="1"/>
</dbReference>
<dbReference type="Pfam" id="PF16411">
    <property type="entry name" value="SusF_SusE"/>
    <property type="match status" value="1"/>
</dbReference>
<dbReference type="PROSITE" id="PS51257">
    <property type="entry name" value="PROKAR_LIPOPROTEIN"/>
    <property type="match status" value="1"/>
</dbReference>